<protein>
    <recommendedName>
        <fullName>UPF0208 membrane protein YfbV</fullName>
    </recommendedName>
</protein>
<reference key="1">
    <citation type="journal article" date="2002" name="Proc. Natl. Acad. Sci. U.S.A.">
        <title>Extensive mosaic structure revealed by the complete genome sequence of uropathogenic Escherichia coli.</title>
        <authorList>
            <person name="Welch R.A."/>
            <person name="Burland V."/>
            <person name="Plunkett G. III"/>
            <person name="Redford P."/>
            <person name="Roesch P."/>
            <person name="Rasko D."/>
            <person name="Buckles E.L."/>
            <person name="Liou S.-R."/>
            <person name="Boutin A."/>
            <person name="Hackett J."/>
            <person name="Stroud D."/>
            <person name="Mayhew G.F."/>
            <person name="Rose D.J."/>
            <person name="Zhou S."/>
            <person name="Schwartz D.C."/>
            <person name="Perna N.T."/>
            <person name="Mobley H.L.T."/>
            <person name="Donnenberg M.S."/>
            <person name="Blattner F.R."/>
        </authorList>
    </citation>
    <scope>NUCLEOTIDE SEQUENCE [LARGE SCALE GENOMIC DNA]</scope>
    <source>
        <strain>CFT073 / ATCC 700928 / UPEC</strain>
    </source>
</reference>
<dbReference type="EMBL" id="AE014075">
    <property type="protein sequence ID" value="AAN81290.1"/>
    <property type="molecule type" value="Genomic_DNA"/>
</dbReference>
<dbReference type="RefSeq" id="WP_000106615.1">
    <property type="nucleotide sequence ID" value="NZ_CP051263.1"/>
</dbReference>
<dbReference type="STRING" id="199310.c2836"/>
<dbReference type="KEGG" id="ecc:c2836"/>
<dbReference type="eggNOG" id="COG3092">
    <property type="taxonomic scope" value="Bacteria"/>
</dbReference>
<dbReference type="HOGENOM" id="CLU_128746_0_0_6"/>
<dbReference type="BioCyc" id="ECOL199310:C2836-MONOMER"/>
<dbReference type="Proteomes" id="UP000001410">
    <property type="component" value="Chromosome"/>
</dbReference>
<dbReference type="GO" id="GO:0005886">
    <property type="term" value="C:plasma membrane"/>
    <property type="evidence" value="ECO:0007669"/>
    <property type="project" value="UniProtKB-SubCell"/>
</dbReference>
<dbReference type="HAMAP" id="MF_01101">
    <property type="entry name" value="UPF0208"/>
    <property type="match status" value="1"/>
</dbReference>
<dbReference type="InterPro" id="IPR007334">
    <property type="entry name" value="UPF0208"/>
</dbReference>
<dbReference type="NCBIfam" id="NF002493">
    <property type="entry name" value="PRK01816.1"/>
    <property type="match status" value="1"/>
</dbReference>
<dbReference type="Pfam" id="PF04217">
    <property type="entry name" value="DUF412"/>
    <property type="match status" value="1"/>
</dbReference>
<keyword id="KW-0997">Cell inner membrane</keyword>
<keyword id="KW-1003">Cell membrane</keyword>
<keyword id="KW-0472">Membrane</keyword>
<keyword id="KW-1185">Reference proteome</keyword>
<keyword id="KW-0812">Transmembrane</keyword>
<keyword id="KW-1133">Transmembrane helix</keyword>
<accession>Q8FFJ2</accession>
<proteinExistence type="inferred from homology"/>
<name>YFBV_ECOL6</name>
<organism>
    <name type="scientific">Escherichia coli O6:H1 (strain CFT073 / ATCC 700928 / UPEC)</name>
    <dbReference type="NCBI Taxonomy" id="199310"/>
    <lineage>
        <taxon>Bacteria</taxon>
        <taxon>Pseudomonadati</taxon>
        <taxon>Pseudomonadota</taxon>
        <taxon>Gammaproteobacteria</taxon>
        <taxon>Enterobacterales</taxon>
        <taxon>Enterobacteriaceae</taxon>
        <taxon>Escherichia</taxon>
    </lineage>
</organism>
<comment type="subcellular location">
    <subcellularLocation>
        <location evidence="1">Cell inner membrane</location>
        <topology evidence="1">Multi-pass membrane protein</topology>
    </subcellularLocation>
</comment>
<comment type="similarity">
    <text evidence="3">Belongs to the UPF0208 family.</text>
</comment>
<sequence length="151" mass="17160">MSTPDNRSVNFFSLFCRGQHYSKTWPLEKRLAPVFVENRVIKMTRYAIRFMPPIAVFTLCWQIALGGQLGPAVATALFALSLPMQGLWWLGKRSVTPLPPAILNWFYEVRGKLQESGQVLAPVEGKPDYQALADTLKRAFKQLDKTFLDDL</sequence>
<gene>
    <name type="primary">yfbV</name>
    <name type="ordered locus">c2836</name>
</gene>
<feature type="chain" id="PRO_0000080811" description="UPF0208 membrane protein YfbV">
    <location>
        <begin position="1"/>
        <end position="151"/>
    </location>
</feature>
<feature type="topological domain" description="Cytoplasmic" evidence="2">
    <location>
        <begin position="1"/>
        <end position="45"/>
    </location>
</feature>
<feature type="transmembrane region" description="Helical" evidence="2">
    <location>
        <begin position="46"/>
        <end position="65"/>
    </location>
</feature>
<feature type="topological domain" description="Periplasmic" evidence="2">
    <location>
        <begin position="66"/>
        <end position="68"/>
    </location>
</feature>
<feature type="transmembrane region" description="Helical" evidence="2">
    <location>
        <begin position="69"/>
        <end position="91"/>
    </location>
</feature>
<feature type="topological domain" description="Cytoplasmic" evidence="2">
    <location>
        <begin position="92"/>
        <end position="151"/>
    </location>
</feature>
<evidence type="ECO:0000250" key="1"/>
<evidence type="ECO:0000255" key="2"/>
<evidence type="ECO:0000305" key="3"/>